<feature type="chain" id="PRO_1000008304" description="Translation initiation factor IF-2">
    <location>
        <begin position="1"/>
        <end position="850"/>
    </location>
</feature>
<feature type="domain" description="tr-type G">
    <location>
        <begin position="350"/>
        <end position="517"/>
    </location>
</feature>
<feature type="region of interest" description="Disordered" evidence="3">
    <location>
        <begin position="50"/>
        <end position="72"/>
    </location>
</feature>
<feature type="region of interest" description="Disordered" evidence="3">
    <location>
        <begin position="92"/>
        <end position="267"/>
    </location>
</feature>
<feature type="region of interest" description="G1" evidence="1">
    <location>
        <begin position="359"/>
        <end position="366"/>
    </location>
</feature>
<feature type="region of interest" description="G2" evidence="1">
    <location>
        <begin position="384"/>
        <end position="388"/>
    </location>
</feature>
<feature type="region of interest" description="G3" evidence="1">
    <location>
        <begin position="405"/>
        <end position="408"/>
    </location>
</feature>
<feature type="region of interest" description="G4" evidence="1">
    <location>
        <begin position="459"/>
        <end position="462"/>
    </location>
</feature>
<feature type="region of interest" description="G5" evidence="1">
    <location>
        <begin position="495"/>
        <end position="497"/>
    </location>
</feature>
<feature type="compositionally biased region" description="Basic and acidic residues" evidence="3">
    <location>
        <begin position="96"/>
        <end position="135"/>
    </location>
</feature>
<feature type="compositionally biased region" description="Low complexity" evidence="3">
    <location>
        <begin position="136"/>
        <end position="172"/>
    </location>
</feature>
<feature type="compositionally biased region" description="Basic and acidic residues" evidence="3">
    <location>
        <begin position="173"/>
        <end position="210"/>
    </location>
</feature>
<feature type="compositionally biased region" description="Basic and acidic residues" evidence="3">
    <location>
        <begin position="234"/>
        <end position="243"/>
    </location>
</feature>
<feature type="compositionally biased region" description="Basic residues" evidence="3">
    <location>
        <begin position="244"/>
        <end position="257"/>
    </location>
</feature>
<feature type="binding site" evidence="2">
    <location>
        <begin position="359"/>
        <end position="366"/>
    </location>
    <ligand>
        <name>GTP</name>
        <dbReference type="ChEBI" id="CHEBI:37565"/>
    </ligand>
</feature>
<feature type="binding site" evidence="2">
    <location>
        <begin position="405"/>
        <end position="409"/>
    </location>
    <ligand>
        <name>GTP</name>
        <dbReference type="ChEBI" id="CHEBI:37565"/>
    </ligand>
</feature>
<feature type="binding site" evidence="2">
    <location>
        <begin position="459"/>
        <end position="462"/>
    </location>
    <ligand>
        <name>GTP</name>
        <dbReference type="ChEBI" id="CHEBI:37565"/>
    </ligand>
</feature>
<dbReference type="EMBL" id="CT573326">
    <property type="protein sequence ID" value="CAK13711.1"/>
    <property type="molecule type" value="Genomic_DNA"/>
</dbReference>
<dbReference type="RefSeq" id="WP_011532141.1">
    <property type="nucleotide sequence ID" value="NC_008027.1"/>
</dbReference>
<dbReference type="SMR" id="Q1IF43"/>
<dbReference type="STRING" id="384676.PSEEN0795"/>
<dbReference type="GeneID" id="32804103"/>
<dbReference type="KEGG" id="pen:PSEEN0795"/>
<dbReference type="eggNOG" id="COG0532">
    <property type="taxonomic scope" value="Bacteria"/>
</dbReference>
<dbReference type="HOGENOM" id="CLU_006301_6_1_6"/>
<dbReference type="OrthoDB" id="9811804at2"/>
<dbReference type="Proteomes" id="UP000000658">
    <property type="component" value="Chromosome"/>
</dbReference>
<dbReference type="GO" id="GO:0005829">
    <property type="term" value="C:cytosol"/>
    <property type="evidence" value="ECO:0007669"/>
    <property type="project" value="TreeGrafter"/>
</dbReference>
<dbReference type="GO" id="GO:0005525">
    <property type="term" value="F:GTP binding"/>
    <property type="evidence" value="ECO:0007669"/>
    <property type="project" value="UniProtKB-KW"/>
</dbReference>
<dbReference type="GO" id="GO:0003924">
    <property type="term" value="F:GTPase activity"/>
    <property type="evidence" value="ECO:0007669"/>
    <property type="project" value="UniProtKB-UniRule"/>
</dbReference>
<dbReference type="GO" id="GO:0003743">
    <property type="term" value="F:translation initiation factor activity"/>
    <property type="evidence" value="ECO:0007669"/>
    <property type="project" value="UniProtKB-UniRule"/>
</dbReference>
<dbReference type="CDD" id="cd01887">
    <property type="entry name" value="IF2_eIF5B"/>
    <property type="match status" value="1"/>
</dbReference>
<dbReference type="CDD" id="cd03702">
    <property type="entry name" value="IF2_mtIF2_II"/>
    <property type="match status" value="1"/>
</dbReference>
<dbReference type="CDD" id="cd03692">
    <property type="entry name" value="mtIF2_IVc"/>
    <property type="match status" value="1"/>
</dbReference>
<dbReference type="FunFam" id="2.40.30.10:FF:000007">
    <property type="entry name" value="Translation initiation factor IF-2"/>
    <property type="match status" value="1"/>
</dbReference>
<dbReference type="FunFam" id="2.40.30.10:FF:000008">
    <property type="entry name" value="Translation initiation factor IF-2"/>
    <property type="match status" value="1"/>
</dbReference>
<dbReference type="FunFam" id="3.40.50.10050:FF:000001">
    <property type="entry name" value="Translation initiation factor IF-2"/>
    <property type="match status" value="1"/>
</dbReference>
<dbReference type="FunFam" id="3.40.50.300:FF:000019">
    <property type="entry name" value="Translation initiation factor IF-2"/>
    <property type="match status" value="1"/>
</dbReference>
<dbReference type="Gene3D" id="3.40.50.300">
    <property type="entry name" value="P-loop containing nucleotide triphosphate hydrolases"/>
    <property type="match status" value="1"/>
</dbReference>
<dbReference type="Gene3D" id="3.30.56.50">
    <property type="entry name" value="Putative DNA-binding domain, N-terminal subdomain of bacterial translation initiation factor IF2"/>
    <property type="match status" value="1"/>
</dbReference>
<dbReference type="Gene3D" id="2.40.30.10">
    <property type="entry name" value="Translation factors"/>
    <property type="match status" value="2"/>
</dbReference>
<dbReference type="Gene3D" id="3.40.50.10050">
    <property type="entry name" value="Translation initiation factor IF- 2, domain 3"/>
    <property type="match status" value="1"/>
</dbReference>
<dbReference type="HAMAP" id="MF_00100_B">
    <property type="entry name" value="IF_2_B"/>
    <property type="match status" value="1"/>
</dbReference>
<dbReference type="InterPro" id="IPR009061">
    <property type="entry name" value="DNA-bd_dom_put_sf"/>
</dbReference>
<dbReference type="InterPro" id="IPR053905">
    <property type="entry name" value="EF-G-like_DII"/>
</dbReference>
<dbReference type="InterPro" id="IPR013575">
    <property type="entry name" value="IF2_assoc_dom_bac"/>
</dbReference>
<dbReference type="InterPro" id="IPR044145">
    <property type="entry name" value="IF2_II"/>
</dbReference>
<dbReference type="InterPro" id="IPR006847">
    <property type="entry name" value="IF2_N"/>
</dbReference>
<dbReference type="InterPro" id="IPR027417">
    <property type="entry name" value="P-loop_NTPase"/>
</dbReference>
<dbReference type="InterPro" id="IPR005225">
    <property type="entry name" value="Small_GTP-bd"/>
</dbReference>
<dbReference type="InterPro" id="IPR000795">
    <property type="entry name" value="T_Tr_GTP-bd_dom"/>
</dbReference>
<dbReference type="InterPro" id="IPR000178">
    <property type="entry name" value="TF_IF2_bacterial-like"/>
</dbReference>
<dbReference type="InterPro" id="IPR015760">
    <property type="entry name" value="TIF_IF2"/>
</dbReference>
<dbReference type="InterPro" id="IPR023115">
    <property type="entry name" value="TIF_IF2_dom3"/>
</dbReference>
<dbReference type="InterPro" id="IPR036925">
    <property type="entry name" value="TIF_IF2_dom3_sf"/>
</dbReference>
<dbReference type="InterPro" id="IPR009000">
    <property type="entry name" value="Transl_B-barrel_sf"/>
</dbReference>
<dbReference type="NCBIfam" id="TIGR00487">
    <property type="entry name" value="IF-2"/>
    <property type="match status" value="1"/>
</dbReference>
<dbReference type="NCBIfam" id="TIGR00231">
    <property type="entry name" value="small_GTP"/>
    <property type="match status" value="1"/>
</dbReference>
<dbReference type="PANTHER" id="PTHR43381:SF5">
    <property type="entry name" value="TR-TYPE G DOMAIN-CONTAINING PROTEIN"/>
    <property type="match status" value="1"/>
</dbReference>
<dbReference type="PANTHER" id="PTHR43381">
    <property type="entry name" value="TRANSLATION INITIATION FACTOR IF-2-RELATED"/>
    <property type="match status" value="1"/>
</dbReference>
<dbReference type="Pfam" id="PF22042">
    <property type="entry name" value="EF-G_D2"/>
    <property type="match status" value="1"/>
</dbReference>
<dbReference type="Pfam" id="PF00009">
    <property type="entry name" value="GTP_EFTU"/>
    <property type="match status" value="1"/>
</dbReference>
<dbReference type="Pfam" id="PF11987">
    <property type="entry name" value="IF-2"/>
    <property type="match status" value="1"/>
</dbReference>
<dbReference type="Pfam" id="PF08364">
    <property type="entry name" value="IF2_assoc"/>
    <property type="match status" value="1"/>
</dbReference>
<dbReference type="Pfam" id="PF04760">
    <property type="entry name" value="IF2_N"/>
    <property type="match status" value="2"/>
</dbReference>
<dbReference type="SUPFAM" id="SSF52156">
    <property type="entry name" value="Initiation factor IF2/eIF5b, domain 3"/>
    <property type="match status" value="1"/>
</dbReference>
<dbReference type="SUPFAM" id="SSF52540">
    <property type="entry name" value="P-loop containing nucleoside triphosphate hydrolases"/>
    <property type="match status" value="1"/>
</dbReference>
<dbReference type="SUPFAM" id="SSF46955">
    <property type="entry name" value="Putative DNA-binding domain"/>
    <property type="match status" value="1"/>
</dbReference>
<dbReference type="SUPFAM" id="SSF50447">
    <property type="entry name" value="Translation proteins"/>
    <property type="match status" value="2"/>
</dbReference>
<dbReference type="PROSITE" id="PS51722">
    <property type="entry name" value="G_TR_2"/>
    <property type="match status" value="1"/>
</dbReference>
<dbReference type="PROSITE" id="PS01176">
    <property type="entry name" value="IF2"/>
    <property type="match status" value="1"/>
</dbReference>
<evidence type="ECO:0000250" key="1"/>
<evidence type="ECO:0000255" key="2">
    <source>
        <dbReference type="HAMAP-Rule" id="MF_00100"/>
    </source>
</evidence>
<evidence type="ECO:0000256" key="3">
    <source>
        <dbReference type="SAM" id="MobiDB-lite"/>
    </source>
</evidence>
<reference key="1">
    <citation type="journal article" date="2006" name="Nat. Biotechnol.">
        <title>Complete genome sequence of the entomopathogenic and metabolically versatile soil bacterium Pseudomonas entomophila.</title>
        <authorList>
            <person name="Vodovar N."/>
            <person name="Vallenet D."/>
            <person name="Cruveiller S."/>
            <person name="Rouy Z."/>
            <person name="Barbe V."/>
            <person name="Acosta C."/>
            <person name="Cattolico L."/>
            <person name="Jubin C."/>
            <person name="Lajus A."/>
            <person name="Segurens B."/>
            <person name="Vacherie B."/>
            <person name="Wincker P."/>
            <person name="Weissenbach J."/>
            <person name="Lemaitre B."/>
            <person name="Medigue C."/>
            <person name="Boccard F."/>
        </authorList>
    </citation>
    <scope>NUCLEOTIDE SEQUENCE [LARGE SCALE GENOMIC DNA]</scope>
    <source>
        <strain>L48</strain>
    </source>
</reference>
<proteinExistence type="inferred from homology"/>
<name>IF2_PSEE4</name>
<gene>
    <name evidence="2" type="primary">infB</name>
    <name type="ordered locus">PSEEN0795</name>
</gene>
<organism>
    <name type="scientific">Pseudomonas entomophila (strain L48)</name>
    <dbReference type="NCBI Taxonomy" id="384676"/>
    <lineage>
        <taxon>Bacteria</taxon>
        <taxon>Pseudomonadati</taxon>
        <taxon>Pseudomonadota</taxon>
        <taxon>Gammaproteobacteria</taxon>
        <taxon>Pseudomonadales</taxon>
        <taxon>Pseudomonadaceae</taxon>
        <taxon>Pseudomonas</taxon>
    </lineage>
</organism>
<sequence length="850" mass="91915">MTQVTVKELAQEVEAPVERLLQQMREAGLPHTDAGQVVTDNEKQTLLTHLKSSHKSKAEEPRKITLQRKTTSTLRVAGSKSISVEVRKKKVFVQRSPEEIQAEQKREQEERRAAENAAREKADADARQRNEEQARRQAAQAPAAAPVAKAEPAPAAAAPAAPAVPDAPVSEDAAARAAERKKDEARRNESRTRDDDRRGGGVAGERRGEAPRVSIKVKVKEKEKAPTPRAAPRTTDEESDGFRRGRGGKGKPKKRNQHGFQNPTGPVIRDVTIGETITVSDLAQQMSVKGAEVVKFMFKLGTPVTINQVLDQETAQLVAEELGHKVTLVSDTALEDSLAESLKFEGESESRAPVVTVMGHVDHGKTSLLDYIRRAKVAAGEAGGITQHIGAYHVETDRGMVTFLDTPGHAAFTQMRARGAKATDIVILVVAADDGVMPQTREAVQHAKAAGVPLVVAVNKIDKPGADLDRIRNELAVEGVTSEDWGGDTPFVKVSAKMGTGVDELLEAVLLQAEILELKATPTAPGRGVVVESRLDKGRGPVATILVQDGTLRQGDMVLVGSNYGRVRAMLDENGKPVKEAGPSIPVEILGLDGTPDAGDEMSVVADEKKAREVALFRQGKYREVKLARAHAGKLENIFETMGQEEKKTLNIVLKTDVRGSLEALQGSLSSLGNDEVQVRVIGGGVGGITESDANLALASNAVLFGFNVRADAGARKIVEQEGLDMRYYNVIYDIIEDVKKALTGMLGSDVRENILGVAEVRDVFRSPKFGAIAGCMVIEGTVYRNRPIRVLREDVVIFEGELESLRRFKDDASEVRNGMECGIGVKSYNDVKVGDKIEVFEKVQVARTL</sequence>
<comment type="function">
    <text evidence="2">One of the essential components for the initiation of protein synthesis. Protects formylmethionyl-tRNA from spontaneous hydrolysis and promotes its binding to the 30S ribosomal subunits. Also involved in the hydrolysis of GTP during the formation of the 70S ribosomal complex.</text>
</comment>
<comment type="subcellular location">
    <subcellularLocation>
        <location evidence="2">Cytoplasm</location>
    </subcellularLocation>
</comment>
<comment type="similarity">
    <text evidence="2">Belongs to the TRAFAC class translation factor GTPase superfamily. Classic translation factor GTPase family. IF-2 subfamily.</text>
</comment>
<accession>Q1IF43</accession>
<keyword id="KW-0963">Cytoplasm</keyword>
<keyword id="KW-0342">GTP-binding</keyword>
<keyword id="KW-0396">Initiation factor</keyword>
<keyword id="KW-0547">Nucleotide-binding</keyword>
<keyword id="KW-0648">Protein biosynthesis</keyword>
<protein>
    <recommendedName>
        <fullName evidence="2">Translation initiation factor IF-2</fullName>
    </recommendedName>
</protein>